<accession>Q5HI31</accession>
<organism>
    <name type="scientific">Staphylococcus aureus (strain COL)</name>
    <dbReference type="NCBI Taxonomy" id="93062"/>
    <lineage>
        <taxon>Bacteria</taxon>
        <taxon>Bacillati</taxon>
        <taxon>Bacillota</taxon>
        <taxon>Bacilli</taxon>
        <taxon>Bacillales</taxon>
        <taxon>Staphylococcaceae</taxon>
        <taxon>Staphylococcus</taxon>
    </lineage>
</organism>
<reference key="1">
    <citation type="journal article" date="2005" name="J. Bacteriol.">
        <title>Insights on evolution of virulence and resistance from the complete genome analysis of an early methicillin-resistant Staphylococcus aureus strain and a biofilm-producing methicillin-resistant Staphylococcus epidermidis strain.</title>
        <authorList>
            <person name="Gill S.R."/>
            <person name="Fouts D.E."/>
            <person name="Archer G.L."/>
            <person name="Mongodin E.F."/>
            <person name="DeBoy R.T."/>
            <person name="Ravel J."/>
            <person name="Paulsen I.T."/>
            <person name="Kolonay J.F."/>
            <person name="Brinkac L.M."/>
            <person name="Beanan M.J."/>
            <person name="Dodson R.J."/>
            <person name="Daugherty S.C."/>
            <person name="Madupu R."/>
            <person name="Angiuoli S.V."/>
            <person name="Durkin A.S."/>
            <person name="Haft D.H."/>
            <person name="Vamathevan J.J."/>
            <person name="Khouri H."/>
            <person name="Utterback T.R."/>
            <person name="Lee C."/>
            <person name="Dimitrov G."/>
            <person name="Jiang L."/>
            <person name="Qin H."/>
            <person name="Weidman J."/>
            <person name="Tran K."/>
            <person name="Kang K.H."/>
            <person name="Hance I.R."/>
            <person name="Nelson K.E."/>
            <person name="Fraser C.M."/>
        </authorList>
    </citation>
    <scope>NUCLEOTIDE SEQUENCE [LARGE SCALE GENOMIC DNA]</scope>
    <source>
        <strain>COL</strain>
    </source>
</reference>
<comment type="function">
    <text evidence="1">Part of the ABC transporter complex TagGH involved in teichoic acids export. Responsible for energy coupling to the transport system.</text>
</comment>
<comment type="catalytic activity">
    <reaction evidence="1">
        <text>ATP + H2O + teichoic acidSide 1 = ADP + phosphate + teichoic acidSide 2.</text>
        <dbReference type="EC" id="7.5.2.4"/>
    </reaction>
</comment>
<comment type="subunit">
    <text evidence="1">The complex is composed of two ATP-binding proteins (TagH) and two transmembrane proteins (TagG).</text>
</comment>
<comment type="subcellular location">
    <subcellularLocation>
        <location evidence="1">Cell membrane</location>
        <topology evidence="1">Peripheral membrane protein</topology>
    </subcellularLocation>
</comment>
<comment type="similarity">
    <text evidence="1">Belongs to the ABC transporter superfamily. Teichoic acids exporter (TC 3.A.1.104.1) family.</text>
</comment>
<gene>
    <name evidence="1" type="primary">tagH</name>
    <name type="ordered locus">SACOL0694</name>
</gene>
<dbReference type="EC" id="7.5.2.4" evidence="1"/>
<dbReference type="EMBL" id="CP000046">
    <property type="protein sequence ID" value="AAW37758.1"/>
    <property type="molecule type" value="Genomic_DNA"/>
</dbReference>
<dbReference type="RefSeq" id="WP_001103232.1">
    <property type="nucleotide sequence ID" value="NZ_JBGOFO010000005.1"/>
</dbReference>
<dbReference type="SMR" id="Q5HI31"/>
<dbReference type="GeneID" id="98344978"/>
<dbReference type="KEGG" id="sac:SACOL0694"/>
<dbReference type="HOGENOM" id="CLU_000604_1_2_9"/>
<dbReference type="Proteomes" id="UP000000530">
    <property type="component" value="Chromosome"/>
</dbReference>
<dbReference type="GO" id="GO:0005886">
    <property type="term" value="C:plasma membrane"/>
    <property type="evidence" value="ECO:0007669"/>
    <property type="project" value="UniProtKB-SubCell"/>
</dbReference>
<dbReference type="GO" id="GO:0015438">
    <property type="term" value="F:ABC-type teichoic acid transporter activity"/>
    <property type="evidence" value="ECO:0007669"/>
    <property type="project" value="UniProtKB-EC"/>
</dbReference>
<dbReference type="GO" id="GO:0005524">
    <property type="term" value="F:ATP binding"/>
    <property type="evidence" value="ECO:0007669"/>
    <property type="project" value="UniProtKB-KW"/>
</dbReference>
<dbReference type="GO" id="GO:0016887">
    <property type="term" value="F:ATP hydrolysis activity"/>
    <property type="evidence" value="ECO:0007669"/>
    <property type="project" value="InterPro"/>
</dbReference>
<dbReference type="CDD" id="cd03220">
    <property type="entry name" value="ABC_KpsT_Wzt"/>
    <property type="match status" value="1"/>
</dbReference>
<dbReference type="FunFam" id="3.40.50.300:FF:003010">
    <property type="entry name" value="Teichoic acids export ATP-binding protein TagH"/>
    <property type="match status" value="1"/>
</dbReference>
<dbReference type="Gene3D" id="3.40.50.300">
    <property type="entry name" value="P-loop containing nucleotide triphosphate hydrolases"/>
    <property type="match status" value="1"/>
</dbReference>
<dbReference type="InterPro" id="IPR003593">
    <property type="entry name" value="AAA+_ATPase"/>
</dbReference>
<dbReference type="InterPro" id="IPR003439">
    <property type="entry name" value="ABC_transporter-like_ATP-bd"/>
</dbReference>
<dbReference type="InterPro" id="IPR017871">
    <property type="entry name" value="ABC_transporter-like_CS"/>
</dbReference>
<dbReference type="InterPro" id="IPR015860">
    <property type="entry name" value="ABC_transpr_TagH-like"/>
</dbReference>
<dbReference type="InterPro" id="IPR050683">
    <property type="entry name" value="Bact_Polysacc_Export_ATP-bd"/>
</dbReference>
<dbReference type="InterPro" id="IPR027417">
    <property type="entry name" value="P-loop_NTPase"/>
</dbReference>
<dbReference type="NCBIfam" id="NF010066">
    <property type="entry name" value="PRK13546.1"/>
    <property type="match status" value="1"/>
</dbReference>
<dbReference type="PANTHER" id="PTHR46743">
    <property type="entry name" value="TEICHOIC ACIDS EXPORT ATP-BINDING PROTEIN TAGH"/>
    <property type="match status" value="1"/>
</dbReference>
<dbReference type="PANTHER" id="PTHR46743:SF2">
    <property type="entry name" value="TEICHOIC ACIDS EXPORT ATP-BINDING PROTEIN TAGH"/>
    <property type="match status" value="1"/>
</dbReference>
<dbReference type="Pfam" id="PF00005">
    <property type="entry name" value="ABC_tran"/>
    <property type="match status" value="1"/>
</dbReference>
<dbReference type="SMART" id="SM00382">
    <property type="entry name" value="AAA"/>
    <property type="match status" value="1"/>
</dbReference>
<dbReference type="SUPFAM" id="SSF52540">
    <property type="entry name" value="P-loop containing nucleoside triphosphate hydrolases"/>
    <property type="match status" value="1"/>
</dbReference>
<dbReference type="PROSITE" id="PS00211">
    <property type="entry name" value="ABC_TRANSPORTER_1"/>
    <property type="match status" value="1"/>
</dbReference>
<dbReference type="PROSITE" id="PS50893">
    <property type="entry name" value="ABC_TRANSPORTER_2"/>
    <property type="match status" value="1"/>
</dbReference>
<dbReference type="PROSITE" id="PS51251">
    <property type="entry name" value="TAGH"/>
    <property type="match status" value="1"/>
</dbReference>
<protein>
    <recommendedName>
        <fullName evidence="1">Teichoic acids export ATP-binding protein TagH</fullName>
        <ecNumber evidence="1">7.5.2.4</ecNumber>
    </recommendedName>
</protein>
<feature type="chain" id="PRO_0000092995" description="Teichoic acids export ATP-binding protein TagH">
    <location>
        <begin position="1"/>
        <end position="264"/>
    </location>
</feature>
<feature type="domain" description="ABC transporter" evidence="1">
    <location>
        <begin position="5"/>
        <end position="243"/>
    </location>
</feature>
<feature type="binding site" evidence="1">
    <location>
        <begin position="57"/>
        <end position="64"/>
    </location>
    <ligand>
        <name>ATP</name>
        <dbReference type="ChEBI" id="CHEBI:30616"/>
    </ligand>
</feature>
<proteinExistence type="inferred from homology"/>
<sequence>MNVSVNIKNVTKEYRIYRTNKERMKDALIPKHKNKTFFALDDISLKAYEGDVIGLVGINGSGKSTLSNIIGGSLSPTVGKVDRNGEVSVIAISAGLSGQLTGIENIEFKMLCMGFKRKEIKAMTPKIIEFSELGEFIYQPVKKYSSGMRAKLGFSINITVNPDILVIDEALSVGDQTFAQKCLDKIYEFKEQNKTIFFVSHNLGQVRQFCTKIAWIEGGKLKDYGELDDVLPKYEAFLNDFKKKSKAEQKEFRNKLDESRFVIK</sequence>
<evidence type="ECO:0000255" key="1">
    <source>
        <dbReference type="HAMAP-Rule" id="MF_01715"/>
    </source>
</evidence>
<name>TAGH_STAAC</name>
<keyword id="KW-0067">ATP-binding</keyword>
<keyword id="KW-1003">Cell membrane</keyword>
<keyword id="KW-0472">Membrane</keyword>
<keyword id="KW-0547">Nucleotide-binding</keyword>
<keyword id="KW-1278">Translocase</keyword>
<keyword id="KW-0813">Transport</keyword>